<protein>
    <recommendedName>
        <fullName evidence="1">Glutamate--tRNA ligase</fullName>
        <ecNumber evidence="1">6.1.1.17</ecNumber>
    </recommendedName>
    <alternativeName>
        <fullName evidence="1">Glutamyl-tRNA synthetase</fullName>
        <shortName evidence="1">GluRS</shortName>
    </alternativeName>
</protein>
<accession>Q5NY25</accession>
<dbReference type="EC" id="6.1.1.17" evidence="1"/>
<dbReference type="EMBL" id="CR555306">
    <property type="protein sequence ID" value="CAI10039.1"/>
    <property type="molecule type" value="Genomic_DNA"/>
</dbReference>
<dbReference type="RefSeq" id="WP_011239684.1">
    <property type="nucleotide sequence ID" value="NC_006513.1"/>
</dbReference>
<dbReference type="SMR" id="Q5NY25"/>
<dbReference type="STRING" id="76114.ebA6855"/>
<dbReference type="KEGG" id="eba:ebA6855"/>
<dbReference type="eggNOG" id="COG0008">
    <property type="taxonomic scope" value="Bacteria"/>
</dbReference>
<dbReference type="HOGENOM" id="CLU_015768_6_0_4"/>
<dbReference type="OrthoDB" id="9807503at2"/>
<dbReference type="Proteomes" id="UP000006552">
    <property type="component" value="Chromosome"/>
</dbReference>
<dbReference type="GO" id="GO:0005829">
    <property type="term" value="C:cytosol"/>
    <property type="evidence" value="ECO:0007669"/>
    <property type="project" value="TreeGrafter"/>
</dbReference>
<dbReference type="GO" id="GO:0005524">
    <property type="term" value="F:ATP binding"/>
    <property type="evidence" value="ECO:0007669"/>
    <property type="project" value="UniProtKB-UniRule"/>
</dbReference>
<dbReference type="GO" id="GO:0004818">
    <property type="term" value="F:glutamate-tRNA ligase activity"/>
    <property type="evidence" value="ECO:0007669"/>
    <property type="project" value="UniProtKB-UniRule"/>
</dbReference>
<dbReference type="GO" id="GO:0000049">
    <property type="term" value="F:tRNA binding"/>
    <property type="evidence" value="ECO:0007669"/>
    <property type="project" value="InterPro"/>
</dbReference>
<dbReference type="GO" id="GO:0008270">
    <property type="term" value="F:zinc ion binding"/>
    <property type="evidence" value="ECO:0007669"/>
    <property type="project" value="InterPro"/>
</dbReference>
<dbReference type="GO" id="GO:0006424">
    <property type="term" value="P:glutamyl-tRNA aminoacylation"/>
    <property type="evidence" value="ECO:0007669"/>
    <property type="project" value="UniProtKB-UniRule"/>
</dbReference>
<dbReference type="CDD" id="cd00808">
    <property type="entry name" value="GluRS_core"/>
    <property type="match status" value="1"/>
</dbReference>
<dbReference type="FunFam" id="3.40.50.620:FF:000007">
    <property type="entry name" value="Glutamate--tRNA ligase"/>
    <property type="match status" value="1"/>
</dbReference>
<dbReference type="Gene3D" id="1.10.10.350">
    <property type="match status" value="1"/>
</dbReference>
<dbReference type="Gene3D" id="3.40.50.620">
    <property type="entry name" value="HUPs"/>
    <property type="match status" value="1"/>
</dbReference>
<dbReference type="HAMAP" id="MF_00022">
    <property type="entry name" value="Glu_tRNA_synth_type1"/>
    <property type="match status" value="1"/>
</dbReference>
<dbReference type="InterPro" id="IPR045462">
    <property type="entry name" value="aa-tRNA-synth_I_cd-bd"/>
</dbReference>
<dbReference type="InterPro" id="IPR020751">
    <property type="entry name" value="aa-tRNA-synth_I_codon-bd_sub2"/>
</dbReference>
<dbReference type="InterPro" id="IPR001412">
    <property type="entry name" value="aa-tRNA-synth_I_CS"/>
</dbReference>
<dbReference type="InterPro" id="IPR008925">
    <property type="entry name" value="aa_tRNA-synth_I_cd-bd_sf"/>
</dbReference>
<dbReference type="InterPro" id="IPR004527">
    <property type="entry name" value="Glu-tRNA-ligase_bac/mito"/>
</dbReference>
<dbReference type="InterPro" id="IPR000924">
    <property type="entry name" value="Glu/Gln-tRNA-synth"/>
</dbReference>
<dbReference type="InterPro" id="IPR020058">
    <property type="entry name" value="Glu/Gln-tRNA-synth_Ib_cat-dom"/>
</dbReference>
<dbReference type="InterPro" id="IPR049940">
    <property type="entry name" value="GluQ/Sye"/>
</dbReference>
<dbReference type="InterPro" id="IPR033910">
    <property type="entry name" value="GluRS_core"/>
</dbReference>
<dbReference type="InterPro" id="IPR014729">
    <property type="entry name" value="Rossmann-like_a/b/a_fold"/>
</dbReference>
<dbReference type="NCBIfam" id="TIGR00464">
    <property type="entry name" value="gltX_bact"/>
    <property type="match status" value="1"/>
</dbReference>
<dbReference type="PANTHER" id="PTHR43311">
    <property type="entry name" value="GLUTAMATE--TRNA LIGASE"/>
    <property type="match status" value="1"/>
</dbReference>
<dbReference type="PANTHER" id="PTHR43311:SF2">
    <property type="entry name" value="GLUTAMATE--TRNA LIGASE, MITOCHONDRIAL-RELATED"/>
    <property type="match status" value="1"/>
</dbReference>
<dbReference type="Pfam" id="PF19269">
    <property type="entry name" value="Anticodon_2"/>
    <property type="match status" value="1"/>
</dbReference>
<dbReference type="Pfam" id="PF00749">
    <property type="entry name" value="tRNA-synt_1c"/>
    <property type="match status" value="1"/>
</dbReference>
<dbReference type="PRINTS" id="PR00987">
    <property type="entry name" value="TRNASYNTHGLU"/>
</dbReference>
<dbReference type="SUPFAM" id="SSF48163">
    <property type="entry name" value="An anticodon-binding domain of class I aminoacyl-tRNA synthetases"/>
    <property type="match status" value="1"/>
</dbReference>
<dbReference type="SUPFAM" id="SSF52374">
    <property type="entry name" value="Nucleotidylyl transferase"/>
    <property type="match status" value="1"/>
</dbReference>
<dbReference type="PROSITE" id="PS00178">
    <property type="entry name" value="AA_TRNA_LIGASE_I"/>
    <property type="match status" value="1"/>
</dbReference>
<comment type="function">
    <text evidence="1">Catalyzes the attachment of glutamate to tRNA(Glu) in a two-step reaction: glutamate is first activated by ATP to form Glu-AMP and then transferred to the acceptor end of tRNA(Glu).</text>
</comment>
<comment type="catalytic activity">
    <reaction evidence="1">
        <text>tRNA(Glu) + L-glutamate + ATP = L-glutamyl-tRNA(Glu) + AMP + diphosphate</text>
        <dbReference type="Rhea" id="RHEA:23540"/>
        <dbReference type="Rhea" id="RHEA-COMP:9663"/>
        <dbReference type="Rhea" id="RHEA-COMP:9680"/>
        <dbReference type="ChEBI" id="CHEBI:29985"/>
        <dbReference type="ChEBI" id="CHEBI:30616"/>
        <dbReference type="ChEBI" id="CHEBI:33019"/>
        <dbReference type="ChEBI" id="CHEBI:78442"/>
        <dbReference type="ChEBI" id="CHEBI:78520"/>
        <dbReference type="ChEBI" id="CHEBI:456215"/>
        <dbReference type="EC" id="6.1.1.17"/>
    </reaction>
</comment>
<comment type="subunit">
    <text evidence="1">Monomer.</text>
</comment>
<comment type="subcellular location">
    <subcellularLocation>
        <location evidence="1">Cytoplasm</location>
    </subcellularLocation>
</comment>
<comment type="similarity">
    <text evidence="1">Belongs to the class-I aminoacyl-tRNA synthetase family. Glutamate--tRNA ligase type 1 subfamily.</text>
</comment>
<organism>
    <name type="scientific">Aromatoleum aromaticum (strain DSM 19018 / LMG 30748 / EbN1)</name>
    <name type="common">Azoarcus sp. (strain EbN1)</name>
    <dbReference type="NCBI Taxonomy" id="76114"/>
    <lineage>
        <taxon>Bacteria</taxon>
        <taxon>Pseudomonadati</taxon>
        <taxon>Pseudomonadota</taxon>
        <taxon>Betaproteobacteria</taxon>
        <taxon>Rhodocyclales</taxon>
        <taxon>Rhodocyclaceae</taxon>
        <taxon>Aromatoleum</taxon>
    </lineage>
</organism>
<feature type="chain" id="PRO_0000119497" description="Glutamate--tRNA ligase">
    <location>
        <begin position="1"/>
        <end position="465"/>
    </location>
</feature>
<feature type="short sequence motif" description="'HIGH' region" evidence="1">
    <location>
        <begin position="11"/>
        <end position="21"/>
    </location>
</feature>
<feature type="short sequence motif" description="'KMSKS' region" evidence="1">
    <location>
        <begin position="243"/>
        <end position="247"/>
    </location>
</feature>
<feature type="binding site" evidence="1">
    <location>
        <position position="246"/>
    </location>
    <ligand>
        <name>ATP</name>
        <dbReference type="ChEBI" id="CHEBI:30616"/>
    </ligand>
</feature>
<proteinExistence type="inferred from homology"/>
<reference key="1">
    <citation type="journal article" date="2005" name="Arch. Microbiol.">
        <title>The genome sequence of an anaerobic aromatic-degrading denitrifying bacterium, strain EbN1.</title>
        <authorList>
            <person name="Rabus R."/>
            <person name="Kube M."/>
            <person name="Heider J."/>
            <person name="Beck A."/>
            <person name="Heitmann K."/>
            <person name="Widdel F."/>
            <person name="Reinhardt R."/>
        </authorList>
    </citation>
    <scope>NUCLEOTIDE SEQUENCE [LARGE SCALE GENOMIC DNA]</scope>
    <source>
        <strain>DSM 19018 / LMG 30748 / EbN1</strain>
    </source>
</reference>
<gene>
    <name evidence="1" type="primary">gltX</name>
    <name type="ordered locus">AZOSEA39140</name>
    <name type="ORF">ebA6855</name>
</gene>
<name>SYE_AROAE</name>
<evidence type="ECO:0000255" key="1">
    <source>
        <dbReference type="HAMAP-Rule" id="MF_00022"/>
    </source>
</evidence>
<keyword id="KW-0030">Aminoacyl-tRNA synthetase</keyword>
<keyword id="KW-0067">ATP-binding</keyword>
<keyword id="KW-0963">Cytoplasm</keyword>
<keyword id="KW-0436">Ligase</keyword>
<keyword id="KW-0547">Nucleotide-binding</keyword>
<keyword id="KW-0648">Protein biosynthesis</keyword>
<keyword id="KW-1185">Reference proteome</keyword>
<sequence>MASNVRTRFAPSPTGYLHIGGARTALFSWAFARRHGGTFILRIEDTDVARSTPAAVQAILDGMSWLGLDADEGPFYQMQRMDRYKAVIREMLAAGSAYHCYASTEELDRMREEQRARGEKPRYDGRWRPEPGKVLPAMPAGVEPVVRFRNPVEGVVAWDDLVKGRIEIANAELDDLVIARADGTPTYNFCVVVDDCDMGITHVIRGDDHVNNTPRQINILRALGAEVPLYAHLSMILGDDGTKLSKRHGAVSVMQYFDDGYLPEAVINYLARLGWSHGDDEIFTREQFVTWFDLDHITPSAAQFNTEKLNWLNAHYIKHSDDARLAADVASRLARRGVDPEAGPRLESVVALYKERVANLNELADAAELYCVAVHPSDELLAQHLTDAGRAALASLKARLADVAWEKPGLNQAIKDTMAEHSLKMPQVAIPLRVATLGVAQTPAIDAVLEVLGRERVLMRIGRYI</sequence>